<name>MGSA_BACMK</name>
<gene>
    <name evidence="1" type="primary">mgsA</name>
    <name type="ordered locus">BcerKBAB4_1459</name>
</gene>
<sequence>MKIALIAHDKKKDDMVSFAYAYKPIFEKHELFATGTTGLRIMEATGLVVTRYQSGPLGGDQEIGAMIAKNEMDMVIFFRDPLTAQPHEPDVNALLRLCDVYAIPLATNMASAEMLMHALERGDLDYRKLRK</sequence>
<protein>
    <recommendedName>
        <fullName evidence="1">Methylglyoxal synthase</fullName>
        <shortName evidence="1">MGS</shortName>
        <ecNumber evidence="1">4.2.3.3</ecNumber>
    </recommendedName>
</protein>
<proteinExistence type="inferred from homology"/>
<dbReference type="EC" id="4.2.3.3" evidence="1"/>
<dbReference type="EMBL" id="CP000903">
    <property type="protein sequence ID" value="ABY42706.1"/>
    <property type="molecule type" value="Genomic_DNA"/>
</dbReference>
<dbReference type="RefSeq" id="WP_000684753.1">
    <property type="nucleotide sequence ID" value="NZ_CAKMRX030000177.1"/>
</dbReference>
<dbReference type="SMR" id="A9VME4"/>
<dbReference type="GeneID" id="92882863"/>
<dbReference type="KEGG" id="bwe:BcerKBAB4_1459"/>
<dbReference type="eggNOG" id="COG1803">
    <property type="taxonomic scope" value="Bacteria"/>
</dbReference>
<dbReference type="HOGENOM" id="CLU_120420_1_0_9"/>
<dbReference type="Proteomes" id="UP000002154">
    <property type="component" value="Chromosome"/>
</dbReference>
<dbReference type="GO" id="GO:0005829">
    <property type="term" value="C:cytosol"/>
    <property type="evidence" value="ECO:0007669"/>
    <property type="project" value="TreeGrafter"/>
</dbReference>
<dbReference type="GO" id="GO:0008929">
    <property type="term" value="F:methylglyoxal synthase activity"/>
    <property type="evidence" value="ECO:0007669"/>
    <property type="project" value="UniProtKB-UniRule"/>
</dbReference>
<dbReference type="GO" id="GO:0019242">
    <property type="term" value="P:methylglyoxal biosynthetic process"/>
    <property type="evidence" value="ECO:0007669"/>
    <property type="project" value="UniProtKB-UniRule"/>
</dbReference>
<dbReference type="CDD" id="cd01422">
    <property type="entry name" value="MGS"/>
    <property type="match status" value="1"/>
</dbReference>
<dbReference type="FunFam" id="3.40.50.1380:FF:000006">
    <property type="entry name" value="Methylglyoxal synthase"/>
    <property type="match status" value="1"/>
</dbReference>
<dbReference type="Gene3D" id="3.40.50.1380">
    <property type="entry name" value="Methylglyoxal synthase-like domain"/>
    <property type="match status" value="1"/>
</dbReference>
<dbReference type="HAMAP" id="MF_00549">
    <property type="entry name" value="Methylglyoxal_synth"/>
    <property type="match status" value="1"/>
</dbReference>
<dbReference type="InterPro" id="IPR004363">
    <property type="entry name" value="Methylgl_synth"/>
</dbReference>
<dbReference type="InterPro" id="IPR018148">
    <property type="entry name" value="Methylglyoxal_synth_AS"/>
</dbReference>
<dbReference type="InterPro" id="IPR011607">
    <property type="entry name" value="MGS-like_dom"/>
</dbReference>
<dbReference type="InterPro" id="IPR036914">
    <property type="entry name" value="MGS-like_dom_sf"/>
</dbReference>
<dbReference type="NCBIfam" id="TIGR00160">
    <property type="entry name" value="MGSA"/>
    <property type="match status" value="1"/>
</dbReference>
<dbReference type="NCBIfam" id="NF003559">
    <property type="entry name" value="PRK05234.1"/>
    <property type="match status" value="1"/>
</dbReference>
<dbReference type="PANTHER" id="PTHR30492">
    <property type="entry name" value="METHYLGLYOXAL SYNTHASE"/>
    <property type="match status" value="1"/>
</dbReference>
<dbReference type="PANTHER" id="PTHR30492:SF0">
    <property type="entry name" value="METHYLGLYOXAL SYNTHASE"/>
    <property type="match status" value="1"/>
</dbReference>
<dbReference type="Pfam" id="PF02142">
    <property type="entry name" value="MGS"/>
    <property type="match status" value="1"/>
</dbReference>
<dbReference type="PIRSF" id="PIRSF006614">
    <property type="entry name" value="Methylglyox_syn"/>
    <property type="match status" value="1"/>
</dbReference>
<dbReference type="SMART" id="SM00851">
    <property type="entry name" value="MGS"/>
    <property type="match status" value="1"/>
</dbReference>
<dbReference type="SUPFAM" id="SSF52335">
    <property type="entry name" value="Methylglyoxal synthase-like"/>
    <property type="match status" value="1"/>
</dbReference>
<dbReference type="PROSITE" id="PS01335">
    <property type="entry name" value="METHYLGLYOXAL_SYNTH"/>
    <property type="match status" value="1"/>
</dbReference>
<dbReference type="PROSITE" id="PS51855">
    <property type="entry name" value="MGS"/>
    <property type="match status" value="1"/>
</dbReference>
<keyword id="KW-0456">Lyase</keyword>
<organism>
    <name type="scientific">Bacillus mycoides (strain KBAB4)</name>
    <name type="common">Bacillus weihenstephanensis</name>
    <dbReference type="NCBI Taxonomy" id="315730"/>
    <lineage>
        <taxon>Bacteria</taxon>
        <taxon>Bacillati</taxon>
        <taxon>Bacillota</taxon>
        <taxon>Bacilli</taxon>
        <taxon>Bacillales</taxon>
        <taxon>Bacillaceae</taxon>
        <taxon>Bacillus</taxon>
        <taxon>Bacillus cereus group</taxon>
    </lineage>
</organism>
<comment type="function">
    <text evidence="1">Catalyzes the formation of methylglyoxal from dihydroxyacetone phosphate.</text>
</comment>
<comment type="catalytic activity">
    <reaction evidence="1">
        <text>dihydroxyacetone phosphate = methylglyoxal + phosphate</text>
        <dbReference type="Rhea" id="RHEA:17937"/>
        <dbReference type="ChEBI" id="CHEBI:17158"/>
        <dbReference type="ChEBI" id="CHEBI:43474"/>
        <dbReference type="ChEBI" id="CHEBI:57642"/>
        <dbReference type="EC" id="4.2.3.3"/>
    </reaction>
</comment>
<comment type="similarity">
    <text evidence="1">Belongs to the methylglyoxal synthase family.</text>
</comment>
<feature type="chain" id="PRO_1000128977" description="Methylglyoxal synthase">
    <location>
        <begin position="1"/>
        <end position="131"/>
    </location>
</feature>
<feature type="domain" description="MGS-like" evidence="1">
    <location>
        <begin position="1"/>
        <end position="131"/>
    </location>
</feature>
<feature type="active site" description="Proton donor/acceptor" evidence="1">
    <location>
        <position position="60"/>
    </location>
</feature>
<feature type="binding site" evidence="1">
    <location>
        <position position="8"/>
    </location>
    <ligand>
        <name>substrate</name>
    </ligand>
</feature>
<feature type="binding site" evidence="1">
    <location>
        <position position="12"/>
    </location>
    <ligand>
        <name>substrate</name>
    </ligand>
</feature>
<feature type="binding site" evidence="1">
    <location>
        <begin position="34"/>
        <end position="37"/>
    </location>
    <ligand>
        <name>substrate</name>
    </ligand>
</feature>
<feature type="binding site" evidence="1">
    <location>
        <begin position="54"/>
        <end position="55"/>
    </location>
    <ligand>
        <name>substrate</name>
    </ligand>
</feature>
<feature type="binding site" evidence="1">
    <location>
        <position position="87"/>
    </location>
    <ligand>
        <name>substrate</name>
    </ligand>
</feature>
<evidence type="ECO:0000255" key="1">
    <source>
        <dbReference type="HAMAP-Rule" id="MF_00549"/>
    </source>
</evidence>
<accession>A9VME4</accession>
<reference key="1">
    <citation type="journal article" date="2008" name="Chem. Biol. Interact.">
        <title>Extending the Bacillus cereus group genomics to putative food-borne pathogens of different toxicity.</title>
        <authorList>
            <person name="Lapidus A."/>
            <person name="Goltsman E."/>
            <person name="Auger S."/>
            <person name="Galleron N."/>
            <person name="Segurens B."/>
            <person name="Dossat C."/>
            <person name="Land M.L."/>
            <person name="Broussolle V."/>
            <person name="Brillard J."/>
            <person name="Guinebretiere M.-H."/>
            <person name="Sanchis V."/>
            <person name="Nguen-the C."/>
            <person name="Lereclus D."/>
            <person name="Richardson P."/>
            <person name="Wincker P."/>
            <person name="Weissenbach J."/>
            <person name="Ehrlich S.D."/>
            <person name="Sorokin A."/>
        </authorList>
    </citation>
    <scope>NUCLEOTIDE SEQUENCE [LARGE SCALE GENOMIC DNA]</scope>
    <source>
        <strain>KBAB4</strain>
    </source>
</reference>